<comment type="subcellular location">
    <subcellularLocation>
        <location evidence="2">Membrane</location>
        <topology evidence="2">Multi-pass membrane protein</topology>
    </subcellularLocation>
</comment>
<evidence type="ECO:0000255" key="1"/>
<evidence type="ECO:0000305" key="2"/>
<sequence length="324" mass="35746">MLLPIIMLTSGVANTVLSKYQDSIAEESEPIKSMAVLQSLNIFLGEACLWFYVLYKRHSQGPGYESLDHLPLKHKVFMALPAIMDICGSTLMNVGLLYTSASIYQMTRGSLIIFVALFATTLLKRTIGQLQWLSLSFVVLGVAIVGYSGSSSSIGSNPILGITAVLIGQFFLATQFTIEEYILSFIQVDPSELVAYEGTYGVFFVLLGMIISYYFIGSTTAGYHGWFDYSHVISRFNEVPALYVISGVILVSIAFFNVSGLAITKLHSATTRSLLDIARTFGIWIIAMAMGMESFHLLQFLGFVLLIYGIFTYHSIIKFPLAES</sequence>
<proteinExistence type="predicted"/>
<reference key="1">
    <citation type="journal article" date="2002" name="Nature">
        <title>The genome sequence of Schizosaccharomyces pombe.</title>
        <authorList>
            <person name="Wood V."/>
            <person name="Gwilliam R."/>
            <person name="Rajandream M.A."/>
            <person name="Lyne M.H."/>
            <person name="Lyne R."/>
            <person name="Stewart A."/>
            <person name="Sgouros J.G."/>
            <person name="Peat N."/>
            <person name="Hayles J."/>
            <person name="Baker S.G."/>
            <person name="Basham D."/>
            <person name="Bowman S."/>
            <person name="Brooks K."/>
            <person name="Brown D."/>
            <person name="Brown S."/>
            <person name="Chillingworth T."/>
            <person name="Churcher C.M."/>
            <person name="Collins M."/>
            <person name="Connor R."/>
            <person name="Cronin A."/>
            <person name="Davis P."/>
            <person name="Feltwell T."/>
            <person name="Fraser A."/>
            <person name="Gentles S."/>
            <person name="Goble A."/>
            <person name="Hamlin N."/>
            <person name="Harris D.E."/>
            <person name="Hidalgo J."/>
            <person name="Hodgson G."/>
            <person name="Holroyd S."/>
            <person name="Hornsby T."/>
            <person name="Howarth S."/>
            <person name="Huckle E.J."/>
            <person name="Hunt S."/>
            <person name="Jagels K."/>
            <person name="James K.D."/>
            <person name="Jones L."/>
            <person name="Jones M."/>
            <person name="Leather S."/>
            <person name="McDonald S."/>
            <person name="McLean J."/>
            <person name="Mooney P."/>
            <person name="Moule S."/>
            <person name="Mungall K.L."/>
            <person name="Murphy L.D."/>
            <person name="Niblett D."/>
            <person name="Odell C."/>
            <person name="Oliver K."/>
            <person name="O'Neil S."/>
            <person name="Pearson D."/>
            <person name="Quail M.A."/>
            <person name="Rabbinowitsch E."/>
            <person name="Rutherford K.M."/>
            <person name="Rutter S."/>
            <person name="Saunders D."/>
            <person name="Seeger K."/>
            <person name="Sharp S."/>
            <person name="Skelton J."/>
            <person name="Simmonds M.N."/>
            <person name="Squares R."/>
            <person name="Squares S."/>
            <person name="Stevens K."/>
            <person name="Taylor K."/>
            <person name="Taylor R.G."/>
            <person name="Tivey A."/>
            <person name="Walsh S.V."/>
            <person name="Warren T."/>
            <person name="Whitehead S."/>
            <person name="Woodward J.R."/>
            <person name="Volckaert G."/>
            <person name="Aert R."/>
            <person name="Robben J."/>
            <person name="Grymonprez B."/>
            <person name="Weltjens I."/>
            <person name="Vanstreels E."/>
            <person name="Rieger M."/>
            <person name="Schaefer M."/>
            <person name="Mueller-Auer S."/>
            <person name="Gabel C."/>
            <person name="Fuchs M."/>
            <person name="Duesterhoeft A."/>
            <person name="Fritzc C."/>
            <person name="Holzer E."/>
            <person name="Moestl D."/>
            <person name="Hilbert H."/>
            <person name="Borzym K."/>
            <person name="Langer I."/>
            <person name="Beck A."/>
            <person name="Lehrach H."/>
            <person name="Reinhardt R."/>
            <person name="Pohl T.M."/>
            <person name="Eger P."/>
            <person name="Zimmermann W."/>
            <person name="Wedler H."/>
            <person name="Wambutt R."/>
            <person name="Purnelle B."/>
            <person name="Goffeau A."/>
            <person name="Cadieu E."/>
            <person name="Dreano S."/>
            <person name="Gloux S."/>
            <person name="Lelaure V."/>
            <person name="Mottier S."/>
            <person name="Galibert F."/>
            <person name="Aves S.J."/>
            <person name="Xiang Z."/>
            <person name="Hunt C."/>
            <person name="Moore K."/>
            <person name="Hurst S.M."/>
            <person name="Lucas M."/>
            <person name="Rochet M."/>
            <person name="Gaillardin C."/>
            <person name="Tallada V.A."/>
            <person name="Garzon A."/>
            <person name="Thode G."/>
            <person name="Daga R.R."/>
            <person name="Cruzado L."/>
            <person name="Jimenez J."/>
            <person name="Sanchez M."/>
            <person name="del Rey F."/>
            <person name="Benito J."/>
            <person name="Dominguez A."/>
            <person name="Revuelta J.L."/>
            <person name="Moreno S."/>
            <person name="Armstrong J."/>
            <person name="Forsburg S.L."/>
            <person name="Cerutti L."/>
            <person name="Lowe T."/>
            <person name="McCombie W.R."/>
            <person name="Paulsen I."/>
            <person name="Potashkin J."/>
            <person name="Shpakovski G.V."/>
            <person name="Ussery D."/>
            <person name="Barrell B.G."/>
            <person name="Nurse P."/>
        </authorList>
    </citation>
    <scope>NUCLEOTIDE SEQUENCE [LARGE SCALE GENOMIC DNA]</scope>
    <source>
        <strain>972 / ATCC 24843</strain>
    </source>
</reference>
<dbReference type="EMBL" id="CU329670">
    <property type="protein sequence ID" value="CAA91507.1"/>
    <property type="molecule type" value="Genomic_DNA"/>
</dbReference>
<dbReference type="PIR" id="S62543">
    <property type="entry name" value="S62543"/>
</dbReference>
<dbReference type="SMR" id="Q09875"/>
<dbReference type="BioGRID" id="279359">
    <property type="interactions" value="8"/>
</dbReference>
<dbReference type="FunCoup" id="Q09875">
    <property type="interactions" value="100"/>
</dbReference>
<dbReference type="STRING" id="284812.Q09875"/>
<dbReference type="PaxDb" id="4896-SPAC12G12.12.1"/>
<dbReference type="EnsemblFungi" id="SPAC12G12.12.1">
    <property type="protein sequence ID" value="SPAC12G12.12.1:pep"/>
    <property type="gene ID" value="SPAC12G12.12"/>
</dbReference>
<dbReference type="KEGG" id="spo:2542918"/>
<dbReference type="PomBase" id="SPAC12G12.12"/>
<dbReference type="VEuPathDB" id="FungiDB:SPAC12G12.12"/>
<dbReference type="eggNOG" id="KOG3912">
    <property type="taxonomic scope" value="Eukaryota"/>
</dbReference>
<dbReference type="HOGENOM" id="CLU_025028_1_0_1"/>
<dbReference type="InParanoid" id="Q09875"/>
<dbReference type="OMA" id="RVEYDNQ"/>
<dbReference type="PhylomeDB" id="Q09875"/>
<dbReference type="PRO" id="PR:Q09875"/>
<dbReference type="Proteomes" id="UP000002485">
    <property type="component" value="Chromosome I"/>
</dbReference>
<dbReference type="GO" id="GO:0000139">
    <property type="term" value="C:Golgi membrane"/>
    <property type="evidence" value="ECO:0000255"/>
    <property type="project" value="PomBase"/>
</dbReference>
<dbReference type="GO" id="GO:0043231">
    <property type="term" value="C:intracellular membrane-bounded organelle"/>
    <property type="evidence" value="ECO:0000318"/>
    <property type="project" value="GO_Central"/>
</dbReference>
<dbReference type="GO" id="GO:0016020">
    <property type="term" value="C:membrane"/>
    <property type="evidence" value="ECO:0000318"/>
    <property type="project" value="GO_Central"/>
</dbReference>
<dbReference type="GO" id="GO:0005459">
    <property type="term" value="F:UDP-galactose transmembrane transporter activity"/>
    <property type="evidence" value="ECO:0000250"/>
    <property type="project" value="PomBase"/>
</dbReference>
<dbReference type="GO" id="GO:0097624">
    <property type="term" value="P:UDP-galactose transmembrane import into Golgi lumen"/>
    <property type="evidence" value="ECO:0000250"/>
    <property type="project" value="PomBase"/>
</dbReference>
<dbReference type="InterPro" id="IPR007271">
    <property type="entry name" value="Nuc_sug_transpt"/>
</dbReference>
<dbReference type="InterPro" id="IPR012404">
    <property type="entry name" value="UCP036436"/>
</dbReference>
<dbReference type="PANTHER" id="PTHR13146">
    <property type="match status" value="1"/>
</dbReference>
<dbReference type="PANTHER" id="PTHR13146:SF0">
    <property type="entry name" value="SOLUTE CARRIER FAMILY 35 MEMBER F6"/>
    <property type="match status" value="1"/>
</dbReference>
<dbReference type="Pfam" id="PF04142">
    <property type="entry name" value="Nuc_sug_transp"/>
    <property type="match status" value="1"/>
</dbReference>
<dbReference type="PIRSF" id="PIRSF036436">
    <property type="entry name" value="UCP036436"/>
    <property type="match status" value="1"/>
</dbReference>
<dbReference type="SUPFAM" id="SSF103481">
    <property type="entry name" value="Multidrug resistance efflux transporter EmrE"/>
    <property type="match status" value="1"/>
</dbReference>
<feature type="chain" id="PRO_0000116431" description="Uncharacterized protein C12G12.12">
    <location>
        <begin position="1"/>
        <end position="324"/>
    </location>
</feature>
<feature type="transmembrane region" description="Helical" evidence="1">
    <location>
        <begin position="34"/>
        <end position="54"/>
    </location>
</feature>
<feature type="transmembrane region" description="Helical" evidence="1">
    <location>
        <begin position="76"/>
        <end position="96"/>
    </location>
</feature>
<feature type="transmembrane region" description="Helical" evidence="1">
    <location>
        <begin position="103"/>
        <end position="123"/>
    </location>
</feature>
<feature type="transmembrane region" description="Helical" evidence="1">
    <location>
        <begin position="127"/>
        <end position="147"/>
    </location>
</feature>
<feature type="transmembrane region" description="Helical" evidence="1">
    <location>
        <begin position="158"/>
        <end position="178"/>
    </location>
</feature>
<feature type="transmembrane region" description="Helical" evidence="1">
    <location>
        <begin position="198"/>
        <end position="218"/>
    </location>
</feature>
<feature type="transmembrane region" description="Helical" evidence="1">
    <location>
        <begin position="243"/>
        <end position="263"/>
    </location>
</feature>
<feature type="transmembrane region" description="Helical" evidence="1">
    <location>
        <begin position="275"/>
        <end position="295"/>
    </location>
</feature>
<feature type="transmembrane region" description="Helical" evidence="1">
    <location>
        <begin position="297"/>
        <end position="317"/>
    </location>
</feature>
<accession>Q09875</accession>
<organism>
    <name type="scientific">Schizosaccharomyces pombe (strain 972 / ATCC 24843)</name>
    <name type="common">Fission yeast</name>
    <dbReference type="NCBI Taxonomy" id="284812"/>
    <lineage>
        <taxon>Eukaryota</taxon>
        <taxon>Fungi</taxon>
        <taxon>Dikarya</taxon>
        <taxon>Ascomycota</taxon>
        <taxon>Taphrinomycotina</taxon>
        <taxon>Schizosaccharomycetes</taxon>
        <taxon>Schizosaccharomycetales</taxon>
        <taxon>Schizosaccharomycetaceae</taxon>
        <taxon>Schizosaccharomyces</taxon>
    </lineage>
</organism>
<keyword id="KW-0472">Membrane</keyword>
<keyword id="KW-1185">Reference proteome</keyword>
<keyword id="KW-0812">Transmembrane</keyword>
<keyword id="KW-1133">Transmembrane helix</keyword>
<name>YAGC_SCHPO</name>
<protein>
    <recommendedName>
        <fullName>Uncharacterized protein C12G12.12</fullName>
    </recommendedName>
</protein>
<gene>
    <name type="ORF">SPAC12G12.12</name>
</gene>